<evidence type="ECO:0000250" key="1">
    <source>
        <dbReference type="UniProtKB" id="O00483"/>
    </source>
</evidence>
<evidence type="ECO:0000250" key="2">
    <source>
        <dbReference type="UniProtKB" id="Q62425"/>
    </source>
</evidence>
<evidence type="ECO:0000305" key="3"/>
<comment type="function">
    <text evidence="1">Component of the cytochrome c oxidase, the last enzyme in the mitochondrial electron transport chain which drives oxidative phosphorylation. The respiratory chain contains 3 multisubunit complexes succinate dehydrogenase (complex II, CII), ubiquinol-cytochrome c oxidoreductase (cytochrome b-c1 complex, complex III, CIII) and cytochrome c oxidase (complex IV, CIV), that cooperate to transfer electrons derived from NADH and succinate to molecular oxygen, creating an electrochemical gradient over the inner membrane that drives transmembrane transport and the ATP synthase. Cytochrome c oxidase is the component of the respiratory chain that catalyzes the reduction of oxygen to water. Electrons originating from reduced cytochrome c in the intermembrane space (IMS) are transferred via the dinuclear copper A center (CU(A)) of subunit 2 and heme A of subunit 1 to the active site in subunit 1, a binuclear center (BNC) formed by heme A3 and copper B (CU(B)). The BNC reduces molecular oxygen to 2 water molecules unsing 4 electrons from cytochrome c in the IMS and 4 protons from the mitochondrial matrix. NDUFA4 is required for complex IV maintenance.</text>
</comment>
<comment type="subunit">
    <text evidence="1 2">Component of the cytochrome c oxidase (complex IV, CIV), a multisubunit enzyme composed of 14 subunits. The complex is composed of a catalytic core of 3 subunits MT-CO1, MT-CO2 and MT-CO3, encoded in the mitochondrial DNA, and 11 supernumerary subunits COX4I, COX5A, COX5B, COX6A, COX6B, COX6C, COX7A, COX7B, COX7C, COX8 and NDUFA4, which are encoded in the nuclear genome. The complex exists as a monomer or a dimer and forms supercomplexes (SCs) in the inner mitochondrial membrane with NADH-ubiquinone oxidoreductase (complex I, CI) and ubiquinol-cytochrome c oxidoreductase (cytochrome b-c1 complex, complex III, CIII), resulting in different assemblies (supercomplex SCI(1)III(2)IV(1) and megacomplex MCI(2)III(2)IV(2)) (By similarity). Interacts with RAB5IF (By similarity). Interacts with FLVCR2; this interaction occurs in the absence of heme and is disrupted upon heme binding.</text>
</comment>
<comment type="subcellular location">
    <subcellularLocation>
        <location evidence="1">Mitochondrion inner membrane</location>
        <topology evidence="1">Single-pass membrane protein</topology>
    </subcellularLocation>
</comment>
<comment type="similarity">
    <text evidence="3">Belongs to the complex IV NDUFA4 subunit family.</text>
</comment>
<proteinExistence type="inferred from homology"/>
<gene>
    <name type="primary">NDUFA4</name>
</gene>
<organism>
    <name type="scientific">Pongo pygmaeus</name>
    <name type="common">Bornean orangutan</name>
    <dbReference type="NCBI Taxonomy" id="9600"/>
    <lineage>
        <taxon>Eukaryota</taxon>
        <taxon>Metazoa</taxon>
        <taxon>Chordata</taxon>
        <taxon>Craniata</taxon>
        <taxon>Vertebrata</taxon>
        <taxon>Euteleostomi</taxon>
        <taxon>Mammalia</taxon>
        <taxon>Eutheria</taxon>
        <taxon>Euarchontoglires</taxon>
        <taxon>Primates</taxon>
        <taxon>Haplorrhini</taxon>
        <taxon>Catarrhini</taxon>
        <taxon>Hominidae</taxon>
        <taxon>Pongo</taxon>
    </lineage>
</organism>
<reference key="1">
    <citation type="journal article" date="2006" name="Gene">
        <title>Adaptive selection of mitochondrial complex I subunits during primate radiation.</title>
        <authorList>
            <person name="Mishmar D."/>
            <person name="Ruiz-Pesini E."/>
            <person name="Mondragon-Palomino M."/>
            <person name="Procaccio V."/>
            <person name="Gaut B."/>
            <person name="Wallace D.C."/>
        </authorList>
    </citation>
    <scope>NUCLEOTIDE SEQUENCE [MRNA]</scope>
</reference>
<dbReference type="EMBL" id="DQ885737">
    <property type="protein sequence ID" value="ABH12246.1"/>
    <property type="molecule type" value="mRNA"/>
</dbReference>
<dbReference type="RefSeq" id="XP_054352454.1">
    <property type="nucleotide sequence ID" value="XM_054496479.2"/>
</dbReference>
<dbReference type="SMR" id="Q0MQ97"/>
<dbReference type="GeneID" id="129041160"/>
<dbReference type="GO" id="GO:0005743">
    <property type="term" value="C:mitochondrial inner membrane"/>
    <property type="evidence" value="ECO:0007669"/>
    <property type="project" value="UniProtKB-SubCell"/>
</dbReference>
<dbReference type="GO" id="GO:0045277">
    <property type="term" value="C:respiratory chain complex IV"/>
    <property type="evidence" value="ECO:0000250"/>
    <property type="project" value="UniProtKB"/>
</dbReference>
<dbReference type="InterPro" id="IPR010530">
    <property type="entry name" value="B12D"/>
</dbReference>
<dbReference type="PANTHER" id="PTHR14256:SF4">
    <property type="entry name" value="CYTOCHROME C OXIDASE SUBUNIT NDUFA4"/>
    <property type="match status" value="1"/>
</dbReference>
<dbReference type="PANTHER" id="PTHR14256">
    <property type="entry name" value="NADH-UBIQUINONE OXIDOREDUCTASE MLRQ SUBUNIT"/>
    <property type="match status" value="1"/>
</dbReference>
<dbReference type="Pfam" id="PF06522">
    <property type="entry name" value="B12D"/>
    <property type="match status" value="1"/>
</dbReference>
<feature type="chain" id="PRO_0000251166" description="Cytochrome c oxidase subunit NDUFA4">
    <location>
        <begin position="1"/>
        <end position="81"/>
    </location>
</feature>
<feature type="topological domain" description="Mitochondrial matrix" evidence="1">
    <location>
        <begin position="1"/>
        <end position="14"/>
    </location>
</feature>
<feature type="transmembrane region" description="Helical" evidence="1">
    <location>
        <begin position="15"/>
        <end position="37"/>
    </location>
</feature>
<feature type="topological domain" description="Mitochondrial intermembrane" evidence="1">
    <location>
        <begin position="38"/>
        <end position="81"/>
    </location>
</feature>
<feature type="modified residue" description="N6-acetyllysine" evidence="2">
    <location>
        <position position="10"/>
    </location>
</feature>
<feature type="modified residue" description="Phosphoserine" evidence="1">
    <location>
        <position position="66"/>
    </location>
</feature>
<sequence length="81" mass="9386">MLRQILSQAKKHPSLIPLFVFIGTGASGATLYLLRLALFNPDVCWDRNNPEPWNKLGPNDQYKFYSVNVDYSKLKKERPDF</sequence>
<name>NDUA4_PONPY</name>
<accession>Q0MQ97</accession>
<protein>
    <recommendedName>
        <fullName>Cytochrome c oxidase subunit NDUFA4</fullName>
    </recommendedName>
</protein>
<keyword id="KW-0007">Acetylation</keyword>
<keyword id="KW-0249">Electron transport</keyword>
<keyword id="KW-0472">Membrane</keyword>
<keyword id="KW-0496">Mitochondrion</keyword>
<keyword id="KW-0999">Mitochondrion inner membrane</keyword>
<keyword id="KW-0597">Phosphoprotein</keyword>
<keyword id="KW-0679">Respiratory chain</keyword>
<keyword id="KW-0812">Transmembrane</keyword>
<keyword id="KW-1133">Transmembrane helix</keyword>
<keyword id="KW-0813">Transport</keyword>